<organism>
    <name type="scientific">Pseudomonas aeruginosa (strain ATCC 15692 / DSM 22644 / CIP 104116 / JCM 14847 / LMG 12228 / 1C / PRS 101 / PAO1)</name>
    <dbReference type="NCBI Taxonomy" id="208964"/>
    <lineage>
        <taxon>Bacteria</taxon>
        <taxon>Pseudomonadati</taxon>
        <taxon>Pseudomonadota</taxon>
        <taxon>Gammaproteobacteria</taxon>
        <taxon>Pseudomonadales</taxon>
        <taxon>Pseudomonadaceae</taxon>
        <taxon>Pseudomonas</taxon>
    </lineage>
</organism>
<sequence>MFVTLIKPLARLHPRAWDFVQLVRLDRPIGIYLLLWPTLWSLWIAADGVPELKNLLIFVLGVILMRAAGCVINDFADRNFDGHVARTKARPLATGKISVREAWITFAVLVALSFGLVLLTNATTVWLSFGAVAVASLYPFMKRYTYYPQVVLGAAYSWGILMAFTAERGELPASAWLLFLANVLWTVAYDSYYAMTDREDDLKIGIKSTAILFGDADRLIIGSLQGLTLLLLVLAGNRFELGLCFYLGLAVAAACFVWEAWSTRDRDPQACFRAFLHNHWAGLAIFLGTVADYALR</sequence>
<proteinExistence type="inferred from homology"/>
<name>UBIA_PSEAE</name>
<dbReference type="EC" id="2.5.1.39" evidence="1"/>
<dbReference type="EMBL" id="AE004091">
    <property type="protein sequence ID" value="AAG08743.1"/>
    <property type="molecule type" value="Genomic_DNA"/>
</dbReference>
<dbReference type="PIR" id="H82977">
    <property type="entry name" value="H82977"/>
</dbReference>
<dbReference type="RefSeq" id="NP_254045.1">
    <property type="nucleotide sequence ID" value="NC_002516.2"/>
</dbReference>
<dbReference type="RefSeq" id="WP_003104612.1">
    <property type="nucleotide sequence ID" value="NZ_QZGE01000020.1"/>
</dbReference>
<dbReference type="SMR" id="Q9HTK0"/>
<dbReference type="FunCoup" id="Q9HTK0">
    <property type="interactions" value="564"/>
</dbReference>
<dbReference type="STRING" id="208964.PA5358"/>
<dbReference type="PaxDb" id="208964-PA5358"/>
<dbReference type="DNASU" id="880317"/>
<dbReference type="GeneID" id="880317"/>
<dbReference type="KEGG" id="pae:PA5358"/>
<dbReference type="PATRIC" id="fig|208964.12.peg.5615"/>
<dbReference type="PseudoCAP" id="PA5358"/>
<dbReference type="HOGENOM" id="CLU_034879_1_0_6"/>
<dbReference type="InParanoid" id="Q9HTK0"/>
<dbReference type="OrthoDB" id="9782418at2"/>
<dbReference type="PhylomeDB" id="Q9HTK0"/>
<dbReference type="BioCyc" id="PAER208964:G1FZ6-5480-MONOMER"/>
<dbReference type="UniPathway" id="UPA00232"/>
<dbReference type="Proteomes" id="UP000002438">
    <property type="component" value="Chromosome"/>
</dbReference>
<dbReference type="GO" id="GO:0005886">
    <property type="term" value="C:plasma membrane"/>
    <property type="evidence" value="ECO:0000318"/>
    <property type="project" value="GO_Central"/>
</dbReference>
<dbReference type="GO" id="GO:0008412">
    <property type="term" value="F:4-hydroxybenzoate polyprenyltransferase activity"/>
    <property type="evidence" value="ECO:0000318"/>
    <property type="project" value="GO_Central"/>
</dbReference>
<dbReference type="GO" id="GO:0006744">
    <property type="term" value="P:ubiquinone biosynthetic process"/>
    <property type="evidence" value="ECO:0000318"/>
    <property type="project" value="GO_Central"/>
</dbReference>
<dbReference type="CDD" id="cd13959">
    <property type="entry name" value="PT_UbiA_COQ2"/>
    <property type="match status" value="1"/>
</dbReference>
<dbReference type="FunFam" id="1.10.357.140:FF:000002">
    <property type="entry name" value="4-hydroxybenzoate octaprenyltransferase"/>
    <property type="match status" value="1"/>
</dbReference>
<dbReference type="FunFam" id="1.20.120.1780:FF:000001">
    <property type="entry name" value="4-hydroxybenzoate octaprenyltransferase"/>
    <property type="match status" value="1"/>
</dbReference>
<dbReference type="Gene3D" id="1.10.357.140">
    <property type="entry name" value="UbiA prenyltransferase"/>
    <property type="match status" value="1"/>
</dbReference>
<dbReference type="Gene3D" id="1.20.120.1780">
    <property type="entry name" value="UbiA prenyltransferase"/>
    <property type="match status" value="1"/>
</dbReference>
<dbReference type="HAMAP" id="MF_01635">
    <property type="entry name" value="UbiA"/>
    <property type="match status" value="1"/>
</dbReference>
<dbReference type="InterPro" id="IPR006370">
    <property type="entry name" value="HB_polyprenyltransferase-like"/>
</dbReference>
<dbReference type="InterPro" id="IPR039653">
    <property type="entry name" value="Prenyltransferase"/>
</dbReference>
<dbReference type="InterPro" id="IPR000537">
    <property type="entry name" value="UbiA_prenyltransferase"/>
</dbReference>
<dbReference type="InterPro" id="IPR030470">
    <property type="entry name" value="UbiA_prenylTrfase_CS"/>
</dbReference>
<dbReference type="InterPro" id="IPR044878">
    <property type="entry name" value="UbiA_sf"/>
</dbReference>
<dbReference type="NCBIfam" id="TIGR01474">
    <property type="entry name" value="ubiA_proteo"/>
    <property type="match status" value="1"/>
</dbReference>
<dbReference type="PANTHER" id="PTHR11048:SF28">
    <property type="entry name" value="4-HYDROXYBENZOATE POLYPRENYLTRANSFERASE, MITOCHONDRIAL"/>
    <property type="match status" value="1"/>
</dbReference>
<dbReference type="PANTHER" id="PTHR11048">
    <property type="entry name" value="PRENYLTRANSFERASES"/>
    <property type="match status" value="1"/>
</dbReference>
<dbReference type="Pfam" id="PF01040">
    <property type="entry name" value="UbiA"/>
    <property type="match status" value="1"/>
</dbReference>
<dbReference type="PROSITE" id="PS00943">
    <property type="entry name" value="UBIA"/>
    <property type="match status" value="1"/>
</dbReference>
<comment type="function">
    <text evidence="1">Catalyzes the prenylation of para-hydroxybenzoate (PHB) with an all-trans polyprenyl group. Mediates the second step in the final reaction sequence of ubiquinone-8 (UQ-8) biosynthesis, which is the condensation of the polyisoprenoid side chain with PHB, generating the first membrane-bound Q intermediate 3-octaprenyl-4-hydroxybenzoate.</text>
</comment>
<comment type="catalytic activity">
    <reaction evidence="1">
        <text>all-trans-octaprenyl diphosphate + 4-hydroxybenzoate = 4-hydroxy-3-(all-trans-octaprenyl)benzoate + diphosphate</text>
        <dbReference type="Rhea" id="RHEA:27782"/>
        <dbReference type="ChEBI" id="CHEBI:1617"/>
        <dbReference type="ChEBI" id="CHEBI:17879"/>
        <dbReference type="ChEBI" id="CHEBI:33019"/>
        <dbReference type="ChEBI" id="CHEBI:57711"/>
        <dbReference type="EC" id="2.5.1.39"/>
    </reaction>
</comment>
<comment type="cofactor">
    <cofactor evidence="1">
        <name>Mg(2+)</name>
        <dbReference type="ChEBI" id="CHEBI:18420"/>
    </cofactor>
</comment>
<comment type="pathway">
    <text evidence="1">Cofactor biosynthesis; ubiquinone biosynthesis.</text>
</comment>
<comment type="subcellular location">
    <subcellularLocation>
        <location evidence="1">Cell inner membrane</location>
        <topology evidence="1">Multi-pass membrane protein</topology>
    </subcellularLocation>
</comment>
<comment type="similarity">
    <text evidence="1">Belongs to the UbiA prenyltransferase family.</text>
</comment>
<protein>
    <recommendedName>
        <fullName evidence="1">4-hydroxybenzoate octaprenyltransferase</fullName>
        <ecNumber evidence="1">2.5.1.39</ecNumber>
    </recommendedName>
    <alternativeName>
        <fullName evidence="1">4-HB polyprenyltransferase</fullName>
    </alternativeName>
</protein>
<feature type="chain" id="PRO_0000262819" description="4-hydroxybenzoate octaprenyltransferase">
    <location>
        <begin position="1"/>
        <end position="296"/>
    </location>
</feature>
<feature type="transmembrane region" description="Helical" evidence="1">
    <location>
        <begin position="29"/>
        <end position="49"/>
    </location>
</feature>
<feature type="transmembrane region" description="Helical" evidence="1">
    <location>
        <begin position="55"/>
        <end position="75"/>
    </location>
</feature>
<feature type="transmembrane region" description="Helical" evidence="1">
    <location>
        <begin position="102"/>
        <end position="122"/>
    </location>
</feature>
<feature type="transmembrane region" description="Helical" evidence="1">
    <location>
        <begin position="146"/>
        <end position="166"/>
    </location>
</feature>
<feature type="transmembrane region" description="Helical" evidence="1">
    <location>
        <begin position="169"/>
        <end position="189"/>
    </location>
</feature>
<feature type="transmembrane region" description="Helical" evidence="1">
    <location>
        <begin position="219"/>
        <end position="239"/>
    </location>
</feature>
<feature type="transmembrane region" description="Helical" evidence="1">
    <location>
        <begin position="241"/>
        <end position="261"/>
    </location>
</feature>
<feature type="transmembrane region" description="Helical" evidence="1">
    <location>
        <begin position="275"/>
        <end position="295"/>
    </location>
</feature>
<gene>
    <name evidence="1" type="primary">ubiA</name>
    <name type="ordered locus">PA5358</name>
</gene>
<accession>Q9HTK0</accession>
<evidence type="ECO:0000255" key="1">
    <source>
        <dbReference type="HAMAP-Rule" id="MF_01635"/>
    </source>
</evidence>
<keyword id="KW-0997">Cell inner membrane</keyword>
<keyword id="KW-1003">Cell membrane</keyword>
<keyword id="KW-0460">Magnesium</keyword>
<keyword id="KW-0472">Membrane</keyword>
<keyword id="KW-1185">Reference proteome</keyword>
<keyword id="KW-0808">Transferase</keyword>
<keyword id="KW-0812">Transmembrane</keyword>
<keyword id="KW-1133">Transmembrane helix</keyword>
<keyword id="KW-0831">Ubiquinone biosynthesis</keyword>
<reference key="1">
    <citation type="journal article" date="2000" name="Nature">
        <title>Complete genome sequence of Pseudomonas aeruginosa PAO1, an opportunistic pathogen.</title>
        <authorList>
            <person name="Stover C.K."/>
            <person name="Pham X.-Q.T."/>
            <person name="Erwin A.L."/>
            <person name="Mizoguchi S.D."/>
            <person name="Warrener P."/>
            <person name="Hickey M.J."/>
            <person name="Brinkman F.S.L."/>
            <person name="Hufnagle W.O."/>
            <person name="Kowalik D.J."/>
            <person name="Lagrou M."/>
            <person name="Garber R.L."/>
            <person name="Goltry L."/>
            <person name="Tolentino E."/>
            <person name="Westbrock-Wadman S."/>
            <person name="Yuan Y."/>
            <person name="Brody L.L."/>
            <person name="Coulter S.N."/>
            <person name="Folger K.R."/>
            <person name="Kas A."/>
            <person name="Larbig K."/>
            <person name="Lim R.M."/>
            <person name="Smith K.A."/>
            <person name="Spencer D.H."/>
            <person name="Wong G.K.-S."/>
            <person name="Wu Z."/>
            <person name="Paulsen I.T."/>
            <person name="Reizer J."/>
            <person name="Saier M.H. Jr."/>
            <person name="Hancock R.E.W."/>
            <person name="Lory S."/>
            <person name="Olson M.V."/>
        </authorList>
    </citation>
    <scope>NUCLEOTIDE SEQUENCE [LARGE SCALE GENOMIC DNA]</scope>
    <source>
        <strain>ATCC 15692 / DSM 22644 / CIP 104116 / JCM 14847 / LMG 12228 / 1C / PRS 101 / PAO1</strain>
    </source>
</reference>